<evidence type="ECO:0000255" key="1">
    <source>
        <dbReference type="HAMAP-Rule" id="MF_01298"/>
    </source>
</evidence>
<accession>Q9YG22</accession>
<gene>
    <name type="ordered locus">APE_0079</name>
</gene>
<dbReference type="EC" id="4.1.1.19" evidence="1"/>
<dbReference type="EMBL" id="BA000002">
    <property type="protein sequence ID" value="BAA78988.1"/>
    <property type="molecule type" value="Genomic_DNA"/>
</dbReference>
<dbReference type="PIR" id="B72761">
    <property type="entry name" value="B72761"/>
</dbReference>
<dbReference type="RefSeq" id="WP_010865472.1">
    <property type="nucleotide sequence ID" value="NC_000854.2"/>
</dbReference>
<dbReference type="SMR" id="Q9YG22"/>
<dbReference type="STRING" id="272557.APE_0079"/>
<dbReference type="EnsemblBacteria" id="BAA78988">
    <property type="protein sequence ID" value="BAA78988"/>
    <property type="gene ID" value="APE_0079"/>
</dbReference>
<dbReference type="GeneID" id="1445629"/>
<dbReference type="KEGG" id="ape:APE_0079"/>
<dbReference type="PATRIC" id="fig|272557.25.peg.47"/>
<dbReference type="eggNOG" id="arCOG00279">
    <property type="taxonomic scope" value="Archaea"/>
</dbReference>
<dbReference type="UniPathway" id="UPA00186">
    <property type="reaction ID" value="UER00284"/>
</dbReference>
<dbReference type="Proteomes" id="UP000002518">
    <property type="component" value="Chromosome"/>
</dbReference>
<dbReference type="GO" id="GO:0005829">
    <property type="term" value="C:cytosol"/>
    <property type="evidence" value="ECO:0007669"/>
    <property type="project" value="TreeGrafter"/>
</dbReference>
<dbReference type="GO" id="GO:0008792">
    <property type="term" value="F:arginine decarboxylase activity"/>
    <property type="evidence" value="ECO:0007669"/>
    <property type="project" value="UniProtKB-UniRule"/>
</dbReference>
<dbReference type="GO" id="GO:0006527">
    <property type="term" value="P:arginine catabolic process"/>
    <property type="evidence" value="ECO:0007669"/>
    <property type="project" value="UniProtKB-UniRule"/>
</dbReference>
<dbReference type="GO" id="GO:0006596">
    <property type="term" value="P:polyamine biosynthetic process"/>
    <property type="evidence" value="ECO:0007669"/>
    <property type="project" value="UniProtKB-UniRule"/>
</dbReference>
<dbReference type="Gene3D" id="3.60.90.10">
    <property type="entry name" value="S-adenosylmethionine decarboxylase"/>
    <property type="match status" value="1"/>
</dbReference>
<dbReference type="HAMAP" id="MF_00464">
    <property type="entry name" value="AdoMetDC_1"/>
    <property type="match status" value="1"/>
</dbReference>
<dbReference type="HAMAP" id="MF_01298">
    <property type="entry name" value="ArgDC"/>
    <property type="match status" value="1"/>
</dbReference>
<dbReference type="InterPro" id="IPR003826">
    <property type="entry name" value="AdoMetDC_fam_prok"/>
</dbReference>
<dbReference type="InterPro" id="IPR027549">
    <property type="entry name" value="ArgDC"/>
</dbReference>
<dbReference type="InterPro" id="IPR016067">
    <property type="entry name" value="S-AdoMet_deCO2ase_core"/>
</dbReference>
<dbReference type="InterPro" id="IPR017716">
    <property type="entry name" value="S-AdoMet_deCOase_pro-enz"/>
</dbReference>
<dbReference type="NCBIfam" id="TIGR03330">
    <property type="entry name" value="SAM_DCase_Bsu"/>
    <property type="match status" value="1"/>
</dbReference>
<dbReference type="PANTHER" id="PTHR33866">
    <property type="entry name" value="S-ADENOSYLMETHIONINE DECARBOXYLASE PROENZYME"/>
    <property type="match status" value="1"/>
</dbReference>
<dbReference type="PANTHER" id="PTHR33866:SF2">
    <property type="entry name" value="S-ADENOSYLMETHIONINE DECARBOXYLASE PROENZYME"/>
    <property type="match status" value="1"/>
</dbReference>
<dbReference type="Pfam" id="PF02675">
    <property type="entry name" value="AdoMet_dc"/>
    <property type="match status" value="1"/>
</dbReference>
<dbReference type="SUPFAM" id="SSF56276">
    <property type="entry name" value="S-adenosylmethionine decarboxylase"/>
    <property type="match status" value="1"/>
</dbReference>
<feature type="chain" id="PRO_0000030129" description="Arginine decarboxylase beta chain" evidence="1">
    <location>
        <begin position="1"/>
        <end position="69"/>
    </location>
</feature>
<feature type="chain" id="PRO_0000030130" description="Arginine decarboxylase alpha chain" evidence="1">
    <location>
        <begin position="70"/>
        <end position="132"/>
    </location>
</feature>
<feature type="active site" description="Schiff-base intermediate with substrate; via pyruvic acid" evidence="1">
    <location>
        <position position="70"/>
    </location>
</feature>
<feature type="active site" description="Proton acceptor; for processing activity" evidence="1">
    <location>
        <position position="75"/>
    </location>
</feature>
<feature type="active site" description="Proton donor; for catalytic activity" evidence="1">
    <location>
        <position position="90"/>
    </location>
</feature>
<feature type="site" description="Cleavage (non-hydrolytic); by autolysis" evidence="1">
    <location>
        <begin position="69"/>
        <end position="70"/>
    </location>
</feature>
<feature type="modified residue" description="Pyruvic acid (Ser); by autocatalysis" evidence="1">
    <location>
        <position position="70"/>
    </location>
</feature>
<reference key="1">
    <citation type="journal article" date="1999" name="DNA Res.">
        <title>Complete genome sequence of an aerobic hyper-thermophilic crenarchaeon, Aeropyrum pernix K1.</title>
        <authorList>
            <person name="Kawarabayasi Y."/>
            <person name="Hino Y."/>
            <person name="Horikawa H."/>
            <person name="Yamazaki S."/>
            <person name="Haikawa Y."/>
            <person name="Jin-no K."/>
            <person name="Takahashi M."/>
            <person name="Sekine M."/>
            <person name="Baba S."/>
            <person name="Ankai A."/>
            <person name="Kosugi H."/>
            <person name="Hosoyama A."/>
            <person name="Fukui S."/>
            <person name="Nagai Y."/>
            <person name="Nishijima K."/>
            <person name="Nakazawa H."/>
            <person name="Takamiya M."/>
            <person name="Masuda S."/>
            <person name="Funahashi T."/>
            <person name="Tanaka T."/>
            <person name="Kudoh Y."/>
            <person name="Yamazaki J."/>
            <person name="Kushida N."/>
            <person name="Oguchi A."/>
            <person name="Aoki K."/>
            <person name="Kubota K."/>
            <person name="Nakamura Y."/>
            <person name="Nomura N."/>
            <person name="Sako Y."/>
            <person name="Kikuchi H."/>
        </authorList>
    </citation>
    <scope>NUCLEOTIDE SEQUENCE [LARGE SCALE GENOMIC DNA]</scope>
    <source>
        <strain>ATCC 700893 / DSM 11879 / JCM 9820 / NBRC 100138 / K1</strain>
    </source>
</reference>
<sequence>MERREDVIVGKHVYGSLYGVPREKATDEEYLRGVVVRAAESAGATVHAVNSWTIPGEKGGVSVIVLVLESHLALHTWPEYDYATFDIYTCGEHTDPWKAFELLLSELKPRKYTVHYVDRSQEKTVLEAQPRR</sequence>
<protein>
    <recommendedName>
        <fullName evidence="1">Arginine decarboxylase proenzyme</fullName>
        <shortName evidence="1">ADC</shortName>
        <shortName evidence="1">ArgDC</shortName>
        <ecNumber evidence="1">4.1.1.19</ecNumber>
    </recommendedName>
    <alternativeName>
        <fullName evidence="1">Pyruvoyl-dependent arginine decarboxylase</fullName>
    </alternativeName>
    <component>
        <recommendedName>
            <fullName evidence="1">Arginine decarboxylase beta chain</fullName>
        </recommendedName>
    </component>
    <component>
        <recommendedName>
            <fullName evidence="1">Arginine decarboxylase alpha chain</fullName>
        </recommendedName>
    </component>
</protein>
<comment type="function">
    <text evidence="1">Specifically catalyzes the decarboxylation of L-arginine to agmatine. Has no S-adenosylmethionine decarboxylase (AdoMetDC) activity.</text>
</comment>
<comment type="catalytic activity">
    <reaction evidence="1">
        <text>L-arginine + H(+) = agmatine + CO2</text>
        <dbReference type="Rhea" id="RHEA:17641"/>
        <dbReference type="ChEBI" id="CHEBI:15378"/>
        <dbReference type="ChEBI" id="CHEBI:16526"/>
        <dbReference type="ChEBI" id="CHEBI:32682"/>
        <dbReference type="ChEBI" id="CHEBI:58145"/>
        <dbReference type="EC" id="4.1.1.19"/>
    </reaction>
</comment>
<comment type="cofactor">
    <cofactor evidence="1">
        <name>pyruvate</name>
        <dbReference type="ChEBI" id="CHEBI:15361"/>
    </cofactor>
    <text evidence="1">Binds 1 pyruvoyl group covalently per subunit.</text>
</comment>
<comment type="pathway">
    <text evidence="1">Amine and polyamine biosynthesis; agmatine biosynthesis; agmatine from L-arginine: step 1/1.</text>
</comment>
<comment type="subunit">
    <text evidence="1">Heterooctamer of four alpha and four beta chains arranged as a tetramer of alpha/beta heterodimers.</text>
</comment>
<comment type="PTM">
    <text evidence="1">Is synthesized initially as an inactive proenzyme. Formation of the active enzyme involves a self-maturation process in which the active site pyruvoyl group is generated from an internal serine residue via an autocatalytic post-translational modification. Two non-identical subunits are generated from the proenzyme in this reaction, and the pyruvate is formed at the N-terminus of the alpha chain, which is derived from the carboxyl end of the proenzyme. The post-translation cleavage follows an unusual pathway, termed non-hydrolytic serinolysis, in which the side chain hydroxyl group of the serine supplies its oxygen atom to form the C-terminus of the beta chain, while the remainder of the serine residue undergoes an oxidative deamination to produce ammonia and the pyruvoyl group blocking the N-terminus of the alpha chain.</text>
</comment>
<comment type="similarity">
    <text evidence="1">Belongs to the prokaryotic AdoMetDC family. Type 1 subfamily.</text>
</comment>
<keyword id="KW-0068">Autocatalytic cleavage</keyword>
<keyword id="KW-0210">Decarboxylase</keyword>
<keyword id="KW-0456">Lyase</keyword>
<keyword id="KW-0620">Polyamine biosynthesis</keyword>
<keyword id="KW-0670">Pyruvate</keyword>
<keyword id="KW-1185">Reference proteome</keyword>
<keyword id="KW-0704">Schiff base</keyword>
<keyword id="KW-0865">Zymogen</keyword>
<name>ARGDC_AERPE</name>
<organism>
    <name type="scientific">Aeropyrum pernix (strain ATCC 700893 / DSM 11879 / JCM 9820 / NBRC 100138 / K1)</name>
    <dbReference type="NCBI Taxonomy" id="272557"/>
    <lineage>
        <taxon>Archaea</taxon>
        <taxon>Thermoproteota</taxon>
        <taxon>Thermoprotei</taxon>
        <taxon>Desulfurococcales</taxon>
        <taxon>Desulfurococcaceae</taxon>
        <taxon>Aeropyrum</taxon>
    </lineage>
</organism>
<proteinExistence type="inferred from homology"/>